<name>UP06_LONON</name>
<feature type="chain" id="PRO_0000302105" description="Unknown protein 6">
    <location>
        <begin position="1" status="less than"/>
        <end position="24" status="greater than"/>
    </location>
</feature>
<feature type="unsure residue" description="I or L" evidence="1">
    <location>
        <position position="9"/>
    </location>
</feature>
<feature type="unsure residue" description="I or L" evidence="1">
    <location>
        <position position="10"/>
    </location>
</feature>
<feature type="unsure residue" description="I or L" evidence="1">
    <location>
        <position position="12"/>
    </location>
</feature>
<feature type="unsure residue" description="I or L" evidence="1">
    <location>
        <position position="15"/>
    </location>
</feature>
<feature type="unsure residue" description="I or L" evidence="1">
    <location>
        <position position="22"/>
    </location>
</feature>
<feature type="non-consecutive residues" evidence="2">
    <location>
        <begin position="7"/>
        <end position="8"/>
    </location>
</feature>
<feature type="non-terminal residue" evidence="2">
    <location>
        <position position="1"/>
    </location>
</feature>
<feature type="non-terminal residue" evidence="2">
    <location>
        <position position="24"/>
    </location>
</feature>
<organism>
    <name type="scientific">Lonomia obliqua</name>
    <name type="common">Moth</name>
    <dbReference type="NCBI Taxonomy" id="304329"/>
    <lineage>
        <taxon>Eukaryota</taxon>
        <taxon>Metazoa</taxon>
        <taxon>Ecdysozoa</taxon>
        <taxon>Arthropoda</taxon>
        <taxon>Hexapoda</taxon>
        <taxon>Insecta</taxon>
        <taxon>Pterygota</taxon>
        <taxon>Neoptera</taxon>
        <taxon>Endopterygota</taxon>
        <taxon>Lepidoptera</taxon>
        <taxon>Glossata</taxon>
        <taxon>Ditrysia</taxon>
        <taxon>Bombycoidea</taxon>
        <taxon>Saturniidae</taxon>
        <taxon>Hemileucinae</taxon>
        <taxon>Lonomia</taxon>
    </lineage>
</organism>
<reference evidence="3" key="1">
    <citation type="journal article" date="2008" name="Toxicon">
        <title>Immunochemical and proteomic technologies as tools for unravelling toxins involved in envenoming by accidental contact with Lonomia obliqua caterpillars.</title>
        <authorList>
            <person name="Ricci-Silva M.E."/>
            <person name="Valente R.H."/>
            <person name="Leon I.R."/>
            <person name="Tambourgi D.V."/>
            <person name="Ramos O.H.P."/>
            <person name="Perales J."/>
            <person name="Chudzinski-Tavassi A.M."/>
        </authorList>
    </citation>
    <scope>PROTEIN SEQUENCE</scope>
    <source>
        <tissue evidence="1">Larval bristle</tissue>
    </source>
</reference>
<sequence length="24" mass="2520">DQAAGVAAIIEIDNIFSESEVISK</sequence>
<accession>P85251</accession>
<evidence type="ECO:0000269" key="1">
    <source>
    </source>
</evidence>
<evidence type="ECO:0000303" key="2">
    <source>
    </source>
</evidence>
<evidence type="ECO:0000305" key="3"/>
<protein>
    <recommendedName>
        <fullName>Unknown protein 6</fullName>
    </recommendedName>
</protein>
<keyword id="KW-0903">Direct protein sequencing</keyword>
<proteinExistence type="evidence at protein level"/>
<comment type="caution">
    <text evidence="1">The order of the peptides shown is unknown.</text>
</comment>